<keyword id="KW-0004">4Fe-4S</keyword>
<keyword id="KW-0408">Iron</keyword>
<keyword id="KW-0411">Iron-sulfur</keyword>
<keyword id="KW-0479">Metal-binding</keyword>
<feature type="chain" id="PRO_0000268229" description="Fe/S biogenesis protein NfuA">
    <location>
        <begin position="1"/>
        <end position="191"/>
    </location>
</feature>
<feature type="binding site" evidence="1">
    <location>
        <position position="149"/>
    </location>
    <ligand>
        <name>[4Fe-4S] cluster</name>
        <dbReference type="ChEBI" id="CHEBI:49883"/>
    </ligand>
</feature>
<feature type="binding site" evidence="1">
    <location>
        <position position="152"/>
    </location>
    <ligand>
        <name>[4Fe-4S] cluster</name>
        <dbReference type="ChEBI" id="CHEBI:49883"/>
    </ligand>
</feature>
<gene>
    <name evidence="1" type="primary">nfuA</name>
    <name type="synonym">yhgI</name>
    <name type="ordered locus">UTI89_C3915</name>
</gene>
<dbReference type="EMBL" id="CP000243">
    <property type="protein sequence ID" value="ABE09344.1"/>
    <property type="molecule type" value="Genomic_DNA"/>
</dbReference>
<dbReference type="RefSeq" id="WP_000619389.1">
    <property type="nucleotide sequence ID" value="NZ_CP064825.1"/>
</dbReference>
<dbReference type="SMR" id="Q1R5M0"/>
<dbReference type="GeneID" id="93778582"/>
<dbReference type="KEGG" id="eci:UTI89_C3915"/>
<dbReference type="HOGENOM" id="CLU_094569_0_0_6"/>
<dbReference type="Proteomes" id="UP000001952">
    <property type="component" value="Chromosome"/>
</dbReference>
<dbReference type="GO" id="GO:0051539">
    <property type="term" value="F:4 iron, 4 sulfur cluster binding"/>
    <property type="evidence" value="ECO:0007669"/>
    <property type="project" value="UniProtKB-UniRule"/>
</dbReference>
<dbReference type="GO" id="GO:0005506">
    <property type="term" value="F:iron ion binding"/>
    <property type="evidence" value="ECO:0007669"/>
    <property type="project" value="InterPro"/>
</dbReference>
<dbReference type="GO" id="GO:0016226">
    <property type="term" value="P:iron-sulfur cluster assembly"/>
    <property type="evidence" value="ECO:0007669"/>
    <property type="project" value="UniProtKB-UniRule"/>
</dbReference>
<dbReference type="GO" id="GO:0051604">
    <property type="term" value="P:protein maturation"/>
    <property type="evidence" value="ECO:0007669"/>
    <property type="project" value="UniProtKB-UniRule"/>
</dbReference>
<dbReference type="FunFam" id="2.60.300.12:FF:000004">
    <property type="entry name" value="Fe/S biogenesis protein NfuA"/>
    <property type="match status" value="1"/>
</dbReference>
<dbReference type="FunFam" id="3.30.300.130:FF:000002">
    <property type="entry name" value="Fe/S biogenesis protein NfuA"/>
    <property type="match status" value="1"/>
</dbReference>
<dbReference type="Gene3D" id="3.30.300.130">
    <property type="entry name" value="Fe-S cluster assembly (FSCA)"/>
    <property type="match status" value="1"/>
</dbReference>
<dbReference type="Gene3D" id="2.60.300.12">
    <property type="entry name" value="HesB-like domain"/>
    <property type="match status" value="1"/>
</dbReference>
<dbReference type="HAMAP" id="MF_01637">
    <property type="entry name" value="Fe_S_biogen_NfuA"/>
    <property type="match status" value="1"/>
</dbReference>
<dbReference type="InterPro" id="IPR017726">
    <property type="entry name" value="Fe/S_biogenesis_protein_NfuA"/>
</dbReference>
<dbReference type="InterPro" id="IPR000361">
    <property type="entry name" value="FeS_biogenesis"/>
</dbReference>
<dbReference type="InterPro" id="IPR034904">
    <property type="entry name" value="FSCA_dom_sf"/>
</dbReference>
<dbReference type="InterPro" id="IPR035903">
    <property type="entry name" value="HesB-like_dom_sf"/>
</dbReference>
<dbReference type="InterPro" id="IPR001075">
    <property type="entry name" value="NIF_FeS_clus_asmbl_NifU_C"/>
</dbReference>
<dbReference type="NCBIfam" id="NF008392">
    <property type="entry name" value="PRK11190.1"/>
    <property type="match status" value="1"/>
</dbReference>
<dbReference type="NCBIfam" id="TIGR03341">
    <property type="entry name" value="YhgI_GntY"/>
    <property type="match status" value="1"/>
</dbReference>
<dbReference type="PANTHER" id="PTHR11178:SF51">
    <property type="entry name" value="FE_S BIOGENESIS PROTEIN NFUA"/>
    <property type="match status" value="1"/>
</dbReference>
<dbReference type="PANTHER" id="PTHR11178">
    <property type="entry name" value="IRON-SULFUR CLUSTER SCAFFOLD PROTEIN NFU-RELATED"/>
    <property type="match status" value="1"/>
</dbReference>
<dbReference type="Pfam" id="PF01521">
    <property type="entry name" value="Fe-S_biosyn"/>
    <property type="match status" value="1"/>
</dbReference>
<dbReference type="Pfam" id="PF01106">
    <property type="entry name" value="NifU"/>
    <property type="match status" value="1"/>
</dbReference>
<dbReference type="SUPFAM" id="SSF117916">
    <property type="entry name" value="Fe-S cluster assembly (FSCA) domain-like"/>
    <property type="match status" value="1"/>
</dbReference>
<dbReference type="SUPFAM" id="SSF89360">
    <property type="entry name" value="HesB-like domain"/>
    <property type="match status" value="1"/>
</dbReference>
<accession>Q1R5M0</accession>
<name>NFUA_ECOUT</name>
<comment type="function">
    <text evidence="1">Involved in iron-sulfur cluster biogenesis. Binds a 4Fe-4S cluster, can transfer this cluster to apoproteins, and thereby intervenes in the maturation of Fe/S proteins. Could also act as a scaffold/chaperone for damaged Fe/S proteins.</text>
</comment>
<comment type="cofactor">
    <cofactor evidence="1">
        <name>[4Fe-4S] cluster</name>
        <dbReference type="ChEBI" id="CHEBI:49883"/>
    </cofactor>
    <text evidence="1">Binds 1 [4Fe-4S] cluster per subunit. The cluster is presumably bound at the interface of two monomers.</text>
</comment>
<comment type="subunit">
    <text evidence="1">Homodimer.</text>
</comment>
<comment type="similarity">
    <text evidence="1">Belongs to the NfuA family.</text>
</comment>
<proteinExistence type="inferred from homology"/>
<evidence type="ECO:0000255" key="1">
    <source>
        <dbReference type="HAMAP-Rule" id="MF_01637"/>
    </source>
</evidence>
<reference key="1">
    <citation type="journal article" date="2006" name="Proc. Natl. Acad. Sci. U.S.A.">
        <title>Identification of genes subject to positive selection in uropathogenic strains of Escherichia coli: a comparative genomics approach.</title>
        <authorList>
            <person name="Chen S.L."/>
            <person name="Hung C.-S."/>
            <person name="Xu J."/>
            <person name="Reigstad C.S."/>
            <person name="Magrini V."/>
            <person name="Sabo A."/>
            <person name="Blasiar D."/>
            <person name="Bieri T."/>
            <person name="Meyer R.R."/>
            <person name="Ozersky P."/>
            <person name="Armstrong J.R."/>
            <person name="Fulton R.S."/>
            <person name="Latreille J.P."/>
            <person name="Spieth J."/>
            <person name="Hooton T.M."/>
            <person name="Mardis E.R."/>
            <person name="Hultgren S.J."/>
            <person name="Gordon J.I."/>
        </authorList>
    </citation>
    <scope>NUCLEOTIDE SEQUENCE [LARGE SCALE GENOMIC DNA]</scope>
    <source>
        <strain>UTI89 / UPEC</strain>
    </source>
</reference>
<sequence length="191" mass="20998">MIRISDAAQAHFAKLLANQEEGTQIRVFVINPGTPNAECGVSYCPPDAVEATDTALKFDLLTAYVDELSAPYLEDAEIDFVTDQLGSQLTLKAPNAKMRKVADDAPLMERVEYMLQSQINPQLAGHGGRVSLMEITEDGYAILQFGGGCNGCSMVDVTLKEGIEKQLLNEFPELKGVRDLTEHQRGEHSYY</sequence>
<protein>
    <recommendedName>
        <fullName evidence="1">Fe/S biogenesis protein NfuA</fullName>
    </recommendedName>
</protein>
<organism>
    <name type="scientific">Escherichia coli (strain UTI89 / UPEC)</name>
    <dbReference type="NCBI Taxonomy" id="364106"/>
    <lineage>
        <taxon>Bacteria</taxon>
        <taxon>Pseudomonadati</taxon>
        <taxon>Pseudomonadota</taxon>
        <taxon>Gammaproteobacteria</taxon>
        <taxon>Enterobacterales</taxon>
        <taxon>Enterobacteriaceae</taxon>
        <taxon>Escherichia</taxon>
    </lineage>
</organism>